<dbReference type="EMBL" id="CP000444">
    <property type="protein sequence ID" value="ABI44274.1"/>
    <property type="molecule type" value="Genomic_DNA"/>
</dbReference>
<dbReference type="SMR" id="Q0HRI1"/>
<dbReference type="KEGG" id="shm:Shewmr7_3291"/>
<dbReference type="HOGENOM" id="CLU_052299_2_0_6"/>
<dbReference type="GO" id="GO:0003677">
    <property type="term" value="F:DNA binding"/>
    <property type="evidence" value="ECO:0007669"/>
    <property type="project" value="InterPro"/>
</dbReference>
<dbReference type="CDD" id="cd22359">
    <property type="entry name" value="SfsA-like_bacterial"/>
    <property type="match status" value="1"/>
</dbReference>
<dbReference type="FunFam" id="2.40.50.580:FF:000001">
    <property type="entry name" value="Sugar fermentation stimulation protein A"/>
    <property type="match status" value="1"/>
</dbReference>
<dbReference type="FunFam" id="3.40.1350.60:FF:000001">
    <property type="entry name" value="Sugar fermentation stimulation protein A"/>
    <property type="match status" value="1"/>
</dbReference>
<dbReference type="Gene3D" id="2.40.50.580">
    <property type="match status" value="1"/>
</dbReference>
<dbReference type="Gene3D" id="3.40.1350.60">
    <property type="match status" value="1"/>
</dbReference>
<dbReference type="HAMAP" id="MF_00095">
    <property type="entry name" value="SfsA"/>
    <property type="match status" value="1"/>
</dbReference>
<dbReference type="InterPro" id="IPR005224">
    <property type="entry name" value="SfsA"/>
</dbReference>
<dbReference type="InterPro" id="IPR040452">
    <property type="entry name" value="SfsA_C"/>
</dbReference>
<dbReference type="InterPro" id="IPR041465">
    <property type="entry name" value="SfsA_N"/>
</dbReference>
<dbReference type="NCBIfam" id="TIGR00230">
    <property type="entry name" value="sfsA"/>
    <property type="match status" value="1"/>
</dbReference>
<dbReference type="PANTHER" id="PTHR30545">
    <property type="entry name" value="SUGAR FERMENTATION STIMULATION PROTEIN A"/>
    <property type="match status" value="1"/>
</dbReference>
<dbReference type="PANTHER" id="PTHR30545:SF2">
    <property type="entry name" value="SUGAR FERMENTATION STIMULATION PROTEIN A"/>
    <property type="match status" value="1"/>
</dbReference>
<dbReference type="Pfam" id="PF03749">
    <property type="entry name" value="SfsA"/>
    <property type="match status" value="1"/>
</dbReference>
<dbReference type="Pfam" id="PF17746">
    <property type="entry name" value="SfsA_N"/>
    <property type="match status" value="1"/>
</dbReference>
<comment type="similarity">
    <text evidence="1">Belongs to the SfsA family.</text>
</comment>
<feature type="chain" id="PRO_1000008030" description="Sugar fermentation stimulation protein homolog">
    <location>
        <begin position="1"/>
        <end position="234"/>
    </location>
</feature>
<organism>
    <name type="scientific">Shewanella sp. (strain MR-7)</name>
    <dbReference type="NCBI Taxonomy" id="60481"/>
    <lineage>
        <taxon>Bacteria</taxon>
        <taxon>Pseudomonadati</taxon>
        <taxon>Pseudomonadota</taxon>
        <taxon>Gammaproteobacteria</taxon>
        <taxon>Alteromonadales</taxon>
        <taxon>Shewanellaceae</taxon>
        <taxon>Shewanella</taxon>
    </lineage>
</organism>
<gene>
    <name evidence="1" type="primary">sfsA</name>
    <name type="ordered locus">Shewmr7_3291</name>
</gene>
<sequence length="234" mass="25965">MHFSPALKPGKLLKRYKRFLADVQLEDGTEITLHCPNTGSMRNCLFPGETVWFSTSNNPKRKYAHTWELMTTPTGGLIGIHSGNANALVEEALNKGIITELTGYDSLSREVKYGDENSRIDILLEAAQKPACYIEVKSCTLLEDGQGYFPDAVSLRGQKHLRELMHMASLGHRAVLLFVVQHTDIHSVAPAAHIDPEYANLLKKAILSGVEVLAYRCEISPDEIHLAQSCPVRV</sequence>
<evidence type="ECO:0000255" key="1">
    <source>
        <dbReference type="HAMAP-Rule" id="MF_00095"/>
    </source>
</evidence>
<proteinExistence type="inferred from homology"/>
<reference key="1">
    <citation type="submission" date="2006-08" db="EMBL/GenBank/DDBJ databases">
        <title>Complete sequence of chromosome 1 of Shewanella sp. MR-7.</title>
        <authorList>
            <person name="Copeland A."/>
            <person name="Lucas S."/>
            <person name="Lapidus A."/>
            <person name="Barry K."/>
            <person name="Detter J.C."/>
            <person name="Glavina del Rio T."/>
            <person name="Hammon N."/>
            <person name="Israni S."/>
            <person name="Dalin E."/>
            <person name="Tice H."/>
            <person name="Pitluck S."/>
            <person name="Kiss H."/>
            <person name="Brettin T."/>
            <person name="Bruce D."/>
            <person name="Han C."/>
            <person name="Tapia R."/>
            <person name="Gilna P."/>
            <person name="Schmutz J."/>
            <person name="Larimer F."/>
            <person name="Land M."/>
            <person name="Hauser L."/>
            <person name="Kyrpides N."/>
            <person name="Mikhailova N."/>
            <person name="Nealson K."/>
            <person name="Konstantinidis K."/>
            <person name="Klappenbach J."/>
            <person name="Tiedje J."/>
            <person name="Richardson P."/>
        </authorList>
    </citation>
    <scope>NUCLEOTIDE SEQUENCE [LARGE SCALE GENOMIC DNA]</scope>
    <source>
        <strain>MR-7</strain>
    </source>
</reference>
<name>SFSA_SHESR</name>
<protein>
    <recommendedName>
        <fullName evidence="1">Sugar fermentation stimulation protein homolog</fullName>
    </recommendedName>
</protein>
<accession>Q0HRI1</accession>